<dbReference type="EMBL" id="AP008937">
    <property type="protein sequence ID" value="BAG26850.1"/>
    <property type="molecule type" value="Genomic_DNA"/>
</dbReference>
<dbReference type="RefSeq" id="WP_003682813.1">
    <property type="nucleotide sequence ID" value="NC_010610.1"/>
</dbReference>
<dbReference type="SMR" id="B2GB18"/>
<dbReference type="GeneID" id="83715177"/>
<dbReference type="KEGG" id="lfe:LAF_0514"/>
<dbReference type="eggNOG" id="COG0323">
    <property type="taxonomic scope" value="Bacteria"/>
</dbReference>
<dbReference type="HOGENOM" id="CLU_004131_4_1_9"/>
<dbReference type="Proteomes" id="UP000001697">
    <property type="component" value="Chromosome"/>
</dbReference>
<dbReference type="GO" id="GO:0032300">
    <property type="term" value="C:mismatch repair complex"/>
    <property type="evidence" value="ECO:0007669"/>
    <property type="project" value="InterPro"/>
</dbReference>
<dbReference type="GO" id="GO:0005524">
    <property type="term" value="F:ATP binding"/>
    <property type="evidence" value="ECO:0007669"/>
    <property type="project" value="InterPro"/>
</dbReference>
<dbReference type="GO" id="GO:0016887">
    <property type="term" value="F:ATP hydrolysis activity"/>
    <property type="evidence" value="ECO:0007669"/>
    <property type="project" value="InterPro"/>
</dbReference>
<dbReference type="GO" id="GO:0140664">
    <property type="term" value="F:ATP-dependent DNA damage sensor activity"/>
    <property type="evidence" value="ECO:0007669"/>
    <property type="project" value="InterPro"/>
</dbReference>
<dbReference type="GO" id="GO:0030983">
    <property type="term" value="F:mismatched DNA binding"/>
    <property type="evidence" value="ECO:0007669"/>
    <property type="project" value="InterPro"/>
</dbReference>
<dbReference type="GO" id="GO:0006298">
    <property type="term" value="P:mismatch repair"/>
    <property type="evidence" value="ECO:0007669"/>
    <property type="project" value="UniProtKB-UniRule"/>
</dbReference>
<dbReference type="CDD" id="cd16926">
    <property type="entry name" value="HATPase_MutL-MLH-PMS-like"/>
    <property type="match status" value="1"/>
</dbReference>
<dbReference type="CDD" id="cd00782">
    <property type="entry name" value="MutL_Trans"/>
    <property type="match status" value="1"/>
</dbReference>
<dbReference type="FunFam" id="3.30.565.10:FF:000003">
    <property type="entry name" value="DNA mismatch repair endonuclease MutL"/>
    <property type="match status" value="1"/>
</dbReference>
<dbReference type="Gene3D" id="3.30.230.10">
    <property type="match status" value="1"/>
</dbReference>
<dbReference type="Gene3D" id="3.30.565.10">
    <property type="entry name" value="Histidine kinase-like ATPase, C-terminal domain"/>
    <property type="match status" value="1"/>
</dbReference>
<dbReference type="Gene3D" id="3.30.1540.20">
    <property type="entry name" value="MutL, C-terminal domain, dimerisation subdomain"/>
    <property type="match status" value="1"/>
</dbReference>
<dbReference type="Gene3D" id="3.30.1370.100">
    <property type="entry name" value="MutL, C-terminal domain, regulatory subdomain"/>
    <property type="match status" value="1"/>
</dbReference>
<dbReference type="HAMAP" id="MF_00149">
    <property type="entry name" value="DNA_mis_repair"/>
    <property type="match status" value="1"/>
</dbReference>
<dbReference type="InterPro" id="IPR014762">
    <property type="entry name" value="DNA_mismatch_repair_CS"/>
</dbReference>
<dbReference type="InterPro" id="IPR020667">
    <property type="entry name" value="DNA_mismatch_repair_MutL"/>
</dbReference>
<dbReference type="InterPro" id="IPR013507">
    <property type="entry name" value="DNA_mismatch_S5_2-like"/>
</dbReference>
<dbReference type="InterPro" id="IPR036890">
    <property type="entry name" value="HATPase_C_sf"/>
</dbReference>
<dbReference type="InterPro" id="IPR002099">
    <property type="entry name" value="MutL/Mlh/PMS"/>
</dbReference>
<dbReference type="InterPro" id="IPR038973">
    <property type="entry name" value="MutL/Mlh/Pms-like"/>
</dbReference>
<dbReference type="InterPro" id="IPR014790">
    <property type="entry name" value="MutL_C"/>
</dbReference>
<dbReference type="InterPro" id="IPR042120">
    <property type="entry name" value="MutL_C_dimsub"/>
</dbReference>
<dbReference type="InterPro" id="IPR042121">
    <property type="entry name" value="MutL_C_regsub"/>
</dbReference>
<dbReference type="InterPro" id="IPR037198">
    <property type="entry name" value="MutL_C_sf"/>
</dbReference>
<dbReference type="InterPro" id="IPR020568">
    <property type="entry name" value="Ribosomal_Su5_D2-typ_SF"/>
</dbReference>
<dbReference type="InterPro" id="IPR014721">
    <property type="entry name" value="Ribsml_uS5_D2-typ_fold_subgr"/>
</dbReference>
<dbReference type="NCBIfam" id="TIGR00585">
    <property type="entry name" value="mutl"/>
    <property type="match status" value="1"/>
</dbReference>
<dbReference type="NCBIfam" id="NF000950">
    <property type="entry name" value="PRK00095.1-3"/>
    <property type="match status" value="1"/>
</dbReference>
<dbReference type="PANTHER" id="PTHR10073">
    <property type="entry name" value="DNA MISMATCH REPAIR PROTEIN MLH, PMS, MUTL"/>
    <property type="match status" value="1"/>
</dbReference>
<dbReference type="PANTHER" id="PTHR10073:SF12">
    <property type="entry name" value="DNA MISMATCH REPAIR PROTEIN MLH1"/>
    <property type="match status" value="1"/>
</dbReference>
<dbReference type="Pfam" id="PF01119">
    <property type="entry name" value="DNA_mis_repair"/>
    <property type="match status" value="1"/>
</dbReference>
<dbReference type="Pfam" id="PF13589">
    <property type="entry name" value="HATPase_c_3"/>
    <property type="match status" value="1"/>
</dbReference>
<dbReference type="Pfam" id="PF08676">
    <property type="entry name" value="MutL_C"/>
    <property type="match status" value="1"/>
</dbReference>
<dbReference type="SMART" id="SM01340">
    <property type="entry name" value="DNA_mis_repair"/>
    <property type="match status" value="1"/>
</dbReference>
<dbReference type="SMART" id="SM00853">
    <property type="entry name" value="MutL_C"/>
    <property type="match status" value="1"/>
</dbReference>
<dbReference type="SUPFAM" id="SSF55874">
    <property type="entry name" value="ATPase domain of HSP90 chaperone/DNA topoisomerase II/histidine kinase"/>
    <property type="match status" value="1"/>
</dbReference>
<dbReference type="SUPFAM" id="SSF118116">
    <property type="entry name" value="DNA mismatch repair protein MutL"/>
    <property type="match status" value="1"/>
</dbReference>
<dbReference type="SUPFAM" id="SSF54211">
    <property type="entry name" value="Ribosomal protein S5 domain 2-like"/>
    <property type="match status" value="1"/>
</dbReference>
<dbReference type="PROSITE" id="PS00058">
    <property type="entry name" value="DNA_MISMATCH_REPAIR_1"/>
    <property type="match status" value="1"/>
</dbReference>
<name>MUTL_LIMF3</name>
<gene>
    <name evidence="1" type="primary">mutL</name>
    <name type="ordered locus">LAF_0514</name>
</gene>
<comment type="function">
    <text evidence="1">This protein is involved in the repair of mismatches in DNA. It is required for dam-dependent methyl-directed DNA mismatch repair. May act as a 'molecular matchmaker', a protein that promotes the formation of a stable complex between two or more DNA-binding proteins in an ATP-dependent manner without itself being part of a final effector complex.</text>
</comment>
<comment type="similarity">
    <text evidence="1">Belongs to the DNA mismatch repair MutL/HexB family.</text>
</comment>
<keyword id="KW-0227">DNA damage</keyword>
<keyword id="KW-0234">DNA repair</keyword>
<keyword id="KW-1185">Reference proteome</keyword>
<evidence type="ECO:0000255" key="1">
    <source>
        <dbReference type="HAMAP-Rule" id="MF_00149"/>
    </source>
</evidence>
<evidence type="ECO:0000256" key="2">
    <source>
        <dbReference type="SAM" id="MobiDB-lite"/>
    </source>
</evidence>
<feature type="chain" id="PRO_1000096660" description="DNA mismatch repair protein MutL">
    <location>
        <begin position="1"/>
        <end position="647"/>
    </location>
</feature>
<feature type="region of interest" description="Disordered" evidence="2">
    <location>
        <begin position="346"/>
        <end position="378"/>
    </location>
</feature>
<organism>
    <name type="scientific">Limosilactobacillus fermentum (strain NBRC 3956 / LMG 18251)</name>
    <name type="common">Lactobacillus fermentum</name>
    <dbReference type="NCBI Taxonomy" id="334390"/>
    <lineage>
        <taxon>Bacteria</taxon>
        <taxon>Bacillati</taxon>
        <taxon>Bacillota</taxon>
        <taxon>Bacilli</taxon>
        <taxon>Lactobacillales</taxon>
        <taxon>Lactobacillaceae</taxon>
        <taxon>Limosilactobacillus</taxon>
    </lineage>
</organism>
<protein>
    <recommendedName>
        <fullName evidence="1">DNA mismatch repair protein MutL</fullName>
    </recommendedName>
</protein>
<sequence>MGKIHELDSVLADQIAAGEVIERPASIVKELAENSLDANSHRIDIIVEEAGLKSVRVIDDGQGIEADDVARAFLRHATSKIADKGDLFKVTTMGFRGEALPSIASVADVLLTTATGGAAGSQIHIKGGEILAHGQASARPGTDILVSDLFYNTPARLKYLKSPHTELARIVDIVNRLALANPTVAFSLTHDGKEVFRSAGNGNLKQVVAAIYGVQAGRKMVEVKGEDPNFKVSGLVSLPELTRAGRQYMTIMINHRYVRNFQLTKALVAGYRSKLMVGRYPLAVINIDLDPVLVDVNVHPAKREVRLSMEPQLVDLLERVVSQAIDQQNLIPDVGDRADELLTREQTVHAPRSAAPRVSERASDEPPAWQPSPTSGEPVIISRRSELASPAVQAFDRRYQNEEVATPFGAQADAKVSQAQPAVEQVSLDIDDRGDVASERFPDLTYLGQLHGTYLLAQASDGLYIVDQHAAQERINYEYYREEIGKVSADQQNFLTPLVLNYSLADALKIQQHQAVLAACGLKLEPFGQNSFMLASHPTWFVAGQEEDTAREMIDWVLASGKLSVKDFRAKAAIMMSCKRAIKANHRLDERQAKALLARLPQCENPFNCPHGRPVTIHFTTTDLEKLFKRIQESHQPFADDFDDHED</sequence>
<accession>B2GB18</accession>
<reference key="1">
    <citation type="journal article" date="2008" name="DNA Res.">
        <title>Comparative genome analysis of Lactobacillus reuteri and Lactobacillus fermentum reveal a genomic island for reuterin and cobalamin production.</title>
        <authorList>
            <person name="Morita H."/>
            <person name="Toh H."/>
            <person name="Fukuda S."/>
            <person name="Horikawa H."/>
            <person name="Oshima K."/>
            <person name="Suzuki T."/>
            <person name="Murakami M."/>
            <person name="Hisamatsu S."/>
            <person name="Kato Y."/>
            <person name="Takizawa T."/>
            <person name="Fukuoka H."/>
            <person name="Yoshimura T."/>
            <person name="Itoh K."/>
            <person name="O'Sullivan D.J."/>
            <person name="McKay L.L."/>
            <person name="Ohno H."/>
            <person name="Kikuchi J."/>
            <person name="Masaoka T."/>
            <person name="Hattori M."/>
        </authorList>
    </citation>
    <scope>NUCLEOTIDE SEQUENCE [LARGE SCALE GENOMIC DNA]</scope>
    <source>
        <strain>NBRC 3956 / LMG 18251</strain>
    </source>
</reference>
<proteinExistence type="inferred from homology"/>